<sequence>MLQPKRTKFRKMHKGRNRGLAQGTDVSFGSFGLKAVGRGRLTARQIEAARRAMTRAVKRQGKIWIRVFPDKPITEKPLAVRMGKGKGNVEYWVALIQPGKVLYEMDGVPEELAREAFKLAAAKLPIKTTFVTKTVM</sequence>
<gene>
    <name evidence="1" type="primary">rplP</name>
    <name type="ordered locus">ECIAI39_3807</name>
</gene>
<proteinExistence type="inferred from homology"/>
<evidence type="ECO:0000255" key="1">
    <source>
        <dbReference type="HAMAP-Rule" id="MF_01342"/>
    </source>
</evidence>
<evidence type="ECO:0000305" key="2"/>
<reference key="1">
    <citation type="journal article" date="2009" name="PLoS Genet.">
        <title>Organised genome dynamics in the Escherichia coli species results in highly diverse adaptive paths.</title>
        <authorList>
            <person name="Touchon M."/>
            <person name="Hoede C."/>
            <person name="Tenaillon O."/>
            <person name="Barbe V."/>
            <person name="Baeriswyl S."/>
            <person name="Bidet P."/>
            <person name="Bingen E."/>
            <person name="Bonacorsi S."/>
            <person name="Bouchier C."/>
            <person name="Bouvet O."/>
            <person name="Calteau A."/>
            <person name="Chiapello H."/>
            <person name="Clermont O."/>
            <person name="Cruveiller S."/>
            <person name="Danchin A."/>
            <person name="Diard M."/>
            <person name="Dossat C."/>
            <person name="Karoui M.E."/>
            <person name="Frapy E."/>
            <person name="Garry L."/>
            <person name="Ghigo J.M."/>
            <person name="Gilles A.M."/>
            <person name="Johnson J."/>
            <person name="Le Bouguenec C."/>
            <person name="Lescat M."/>
            <person name="Mangenot S."/>
            <person name="Martinez-Jehanne V."/>
            <person name="Matic I."/>
            <person name="Nassif X."/>
            <person name="Oztas S."/>
            <person name="Petit M.A."/>
            <person name="Pichon C."/>
            <person name="Rouy Z."/>
            <person name="Ruf C.S."/>
            <person name="Schneider D."/>
            <person name="Tourret J."/>
            <person name="Vacherie B."/>
            <person name="Vallenet D."/>
            <person name="Medigue C."/>
            <person name="Rocha E.P.C."/>
            <person name="Denamur E."/>
        </authorList>
    </citation>
    <scope>NUCLEOTIDE SEQUENCE [LARGE SCALE GENOMIC DNA]</scope>
    <source>
        <strain>IAI39 / ExPEC</strain>
    </source>
</reference>
<accession>B7NLN2</accession>
<protein>
    <recommendedName>
        <fullName evidence="1">Large ribosomal subunit protein uL16</fullName>
    </recommendedName>
    <alternativeName>
        <fullName evidence="2">50S ribosomal protein L16</fullName>
    </alternativeName>
</protein>
<dbReference type="EMBL" id="CU928164">
    <property type="protein sequence ID" value="CAR19921.1"/>
    <property type="molecule type" value="Genomic_DNA"/>
</dbReference>
<dbReference type="RefSeq" id="WP_000941212.1">
    <property type="nucleotide sequence ID" value="NC_011750.1"/>
</dbReference>
<dbReference type="RefSeq" id="YP_002409704.1">
    <property type="nucleotide sequence ID" value="NC_011750.1"/>
</dbReference>
<dbReference type="SMR" id="B7NLN2"/>
<dbReference type="STRING" id="585057.ECIAI39_3807"/>
<dbReference type="GeneID" id="93778674"/>
<dbReference type="KEGG" id="ect:ECIAI39_3807"/>
<dbReference type="PATRIC" id="fig|585057.6.peg.3944"/>
<dbReference type="HOGENOM" id="CLU_078858_2_1_6"/>
<dbReference type="Proteomes" id="UP000000749">
    <property type="component" value="Chromosome"/>
</dbReference>
<dbReference type="GO" id="GO:0022625">
    <property type="term" value="C:cytosolic large ribosomal subunit"/>
    <property type="evidence" value="ECO:0007669"/>
    <property type="project" value="TreeGrafter"/>
</dbReference>
<dbReference type="GO" id="GO:0019843">
    <property type="term" value="F:rRNA binding"/>
    <property type="evidence" value="ECO:0007669"/>
    <property type="project" value="UniProtKB-UniRule"/>
</dbReference>
<dbReference type="GO" id="GO:0003735">
    <property type="term" value="F:structural constituent of ribosome"/>
    <property type="evidence" value="ECO:0007669"/>
    <property type="project" value="InterPro"/>
</dbReference>
<dbReference type="GO" id="GO:0000049">
    <property type="term" value="F:tRNA binding"/>
    <property type="evidence" value="ECO:0007669"/>
    <property type="project" value="UniProtKB-KW"/>
</dbReference>
<dbReference type="GO" id="GO:0006412">
    <property type="term" value="P:translation"/>
    <property type="evidence" value="ECO:0007669"/>
    <property type="project" value="UniProtKB-UniRule"/>
</dbReference>
<dbReference type="CDD" id="cd01433">
    <property type="entry name" value="Ribosomal_L16_L10e"/>
    <property type="match status" value="1"/>
</dbReference>
<dbReference type="FunFam" id="3.90.1170.10:FF:000001">
    <property type="entry name" value="50S ribosomal protein L16"/>
    <property type="match status" value="1"/>
</dbReference>
<dbReference type="Gene3D" id="3.90.1170.10">
    <property type="entry name" value="Ribosomal protein L10e/L16"/>
    <property type="match status" value="1"/>
</dbReference>
<dbReference type="HAMAP" id="MF_01342">
    <property type="entry name" value="Ribosomal_uL16"/>
    <property type="match status" value="1"/>
</dbReference>
<dbReference type="InterPro" id="IPR047873">
    <property type="entry name" value="Ribosomal_uL16"/>
</dbReference>
<dbReference type="InterPro" id="IPR000114">
    <property type="entry name" value="Ribosomal_uL16_bact-type"/>
</dbReference>
<dbReference type="InterPro" id="IPR020798">
    <property type="entry name" value="Ribosomal_uL16_CS"/>
</dbReference>
<dbReference type="InterPro" id="IPR016180">
    <property type="entry name" value="Ribosomal_uL16_dom"/>
</dbReference>
<dbReference type="InterPro" id="IPR036920">
    <property type="entry name" value="Ribosomal_uL16_sf"/>
</dbReference>
<dbReference type="NCBIfam" id="TIGR01164">
    <property type="entry name" value="rplP_bact"/>
    <property type="match status" value="1"/>
</dbReference>
<dbReference type="PANTHER" id="PTHR12220">
    <property type="entry name" value="50S/60S RIBOSOMAL PROTEIN L16"/>
    <property type="match status" value="1"/>
</dbReference>
<dbReference type="PANTHER" id="PTHR12220:SF13">
    <property type="entry name" value="LARGE RIBOSOMAL SUBUNIT PROTEIN UL16M"/>
    <property type="match status" value="1"/>
</dbReference>
<dbReference type="Pfam" id="PF00252">
    <property type="entry name" value="Ribosomal_L16"/>
    <property type="match status" value="1"/>
</dbReference>
<dbReference type="PRINTS" id="PR00060">
    <property type="entry name" value="RIBOSOMALL16"/>
</dbReference>
<dbReference type="SUPFAM" id="SSF54686">
    <property type="entry name" value="Ribosomal protein L16p/L10e"/>
    <property type="match status" value="1"/>
</dbReference>
<dbReference type="PROSITE" id="PS00586">
    <property type="entry name" value="RIBOSOMAL_L16_1"/>
    <property type="match status" value="1"/>
</dbReference>
<dbReference type="PROSITE" id="PS00701">
    <property type="entry name" value="RIBOSOMAL_L16_2"/>
    <property type="match status" value="1"/>
</dbReference>
<name>RL16_ECO7I</name>
<keyword id="KW-0687">Ribonucleoprotein</keyword>
<keyword id="KW-0689">Ribosomal protein</keyword>
<keyword id="KW-0694">RNA-binding</keyword>
<keyword id="KW-0699">rRNA-binding</keyword>
<keyword id="KW-0820">tRNA-binding</keyword>
<feature type="chain" id="PRO_1000142965" description="Large ribosomal subunit protein uL16">
    <location>
        <begin position="1"/>
        <end position="136"/>
    </location>
</feature>
<comment type="function">
    <text evidence="1">Binds 23S rRNA and is also seen to make contacts with the A and possibly P site tRNAs.</text>
</comment>
<comment type="subunit">
    <text evidence="1">Part of the 50S ribosomal subunit.</text>
</comment>
<comment type="similarity">
    <text evidence="1">Belongs to the universal ribosomal protein uL16 family.</text>
</comment>
<organism>
    <name type="scientific">Escherichia coli O7:K1 (strain IAI39 / ExPEC)</name>
    <dbReference type="NCBI Taxonomy" id="585057"/>
    <lineage>
        <taxon>Bacteria</taxon>
        <taxon>Pseudomonadati</taxon>
        <taxon>Pseudomonadota</taxon>
        <taxon>Gammaproteobacteria</taxon>
        <taxon>Enterobacterales</taxon>
        <taxon>Enterobacteriaceae</taxon>
        <taxon>Escherichia</taxon>
    </lineage>
</organism>